<sequence>MTKEIKVKVQLVRSPIGTQESHRATVRGLGLRGVNSVSELQDTPAVRGMINKISYLVKVI</sequence>
<dbReference type="EMBL" id="CP000529">
    <property type="protein sequence ID" value="ABM35661.1"/>
    <property type="molecule type" value="Genomic_DNA"/>
</dbReference>
<dbReference type="RefSeq" id="WP_011799767.1">
    <property type="nucleotide sequence ID" value="NC_008781.1"/>
</dbReference>
<dbReference type="SMR" id="A1VJ33"/>
<dbReference type="STRING" id="365044.Pnap_0338"/>
<dbReference type="KEGG" id="pna:Pnap_0338"/>
<dbReference type="eggNOG" id="COG1841">
    <property type="taxonomic scope" value="Bacteria"/>
</dbReference>
<dbReference type="HOGENOM" id="CLU_131047_1_4_4"/>
<dbReference type="OrthoDB" id="9812790at2"/>
<dbReference type="Proteomes" id="UP000000644">
    <property type="component" value="Chromosome"/>
</dbReference>
<dbReference type="GO" id="GO:0022625">
    <property type="term" value="C:cytosolic large ribosomal subunit"/>
    <property type="evidence" value="ECO:0007669"/>
    <property type="project" value="TreeGrafter"/>
</dbReference>
<dbReference type="GO" id="GO:0003735">
    <property type="term" value="F:structural constituent of ribosome"/>
    <property type="evidence" value="ECO:0007669"/>
    <property type="project" value="InterPro"/>
</dbReference>
<dbReference type="GO" id="GO:0006412">
    <property type="term" value="P:translation"/>
    <property type="evidence" value="ECO:0007669"/>
    <property type="project" value="UniProtKB-UniRule"/>
</dbReference>
<dbReference type="CDD" id="cd01658">
    <property type="entry name" value="Ribosomal_L30"/>
    <property type="match status" value="1"/>
</dbReference>
<dbReference type="FunFam" id="3.30.1390.20:FF:000001">
    <property type="entry name" value="50S ribosomal protein L30"/>
    <property type="match status" value="1"/>
</dbReference>
<dbReference type="Gene3D" id="3.30.1390.20">
    <property type="entry name" value="Ribosomal protein L30, ferredoxin-like fold domain"/>
    <property type="match status" value="1"/>
</dbReference>
<dbReference type="HAMAP" id="MF_01371_B">
    <property type="entry name" value="Ribosomal_uL30_B"/>
    <property type="match status" value="1"/>
</dbReference>
<dbReference type="InterPro" id="IPR036919">
    <property type="entry name" value="Ribo_uL30_ferredoxin-like_sf"/>
</dbReference>
<dbReference type="InterPro" id="IPR005996">
    <property type="entry name" value="Ribosomal_uL30_bac-type"/>
</dbReference>
<dbReference type="InterPro" id="IPR016082">
    <property type="entry name" value="Ribosomal_uL30_ferredoxin-like"/>
</dbReference>
<dbReference type="NCBIfam" id="TIGR01308">
    <property type="entry name" value="rpmD_bact"/>
    <property type="match status" value="1"/>
</dbReference>
<dbReference type="PANTHER" id="PTHR15892:SF2">
    <property type="entry name" value="LARGE RIBOSOMAL SUBUNIT PROTEIN UL30M"/>
    <property type="match status" value="1"/>
</dbReference>
<dbReference type="PANTHER" id="PTHR15892">
    <property type="entry name" value="MITOCHONDRIAL RIBOSOMAL PROTEIN L30"/>
    <property type="match status" value="1"/>
</dbReference>
<dbReference type="Pfam" id="PF00327">
    <property type="entry name" value="Ribosomal_L30"/>
    <property type="match status" value="1"/>
</dbReference>
<dbReference type="PIRSF" id="PIRSF002211">
    <property type="entry name" value="Ribosomal_L30_bac-type"/>
    <property type="match status" value="1"/>
</dbReference>
<dbReference type="SUPFAM" id="SSF55129">
    <property type="entry name" value="Ribosomal protein L30p/L7e"/>
    <property type="match status" value="1"/>
</dbReference>
<name>RL30_POLNA</name>
<proteinExistence type="inferred from homology"/>
<keyword id="KW-1185">Reference proteome</keyword>
<keyword id="KW-0687">Ribonucleoprotein</keyword>
<keyword id="KW-0689">Ribosomal protein</keyword>
<evidence type="ECO:0000255" key="1">
    <source>
        <dbReference type="HAMAP-Rule" id="MF_01371"/>
    </source>
</evidence>
<evidence type="ECO:0000305" key="2"/>
<reference key="1">
    <citation type="journal article" date="2009" name="Environ. Microbiol.">
        <title>The genome of Polaromonas naphthalenivorans strain CJ2, isolated from coal tar-contaminated sediment, reveals physiological and metabolic versatility and evolution through extensive horizontal gene transfer.</title>
        <authorList>
            <person name="Yagi J.M."/>
            <person name="Sims D."/>
            <person name="Brettin T."/>
            <person name="Bruce D."/>
            <person name="Madsen E.L."/>
        </authorList>
    </citation>
    <scope>NUCLEOTIDE SEQUENCE [LARGE SCALE GENOMIC DNA]</scope>
    <source>
        <strain>CJ2</strain>
    </source>
</reference>
<feature type="chain" id="PRO_1000056090" description="Large ribosomal subunit protein uL30">
    <location>
        <begin position="1"/>
        <end position="60"/>
    </location>
</feature>
<comment type="subunit">
    <text evidence="1">Part of the 50S ribosomal subunit.</text>
</comment>
<comment type="similarity">
    <text evidence="1">Belongs to the universal ribosomal protein uL30 family.</text>
</comment>
<accession>A1VJ33</accession>
<gene>
    <name evidence="1" type="primary">rpmD</name>
    <name type="ordered locus">Pnap_0338</name>
</gene>
<organism>
    <name type="scientific">Polaromonas naphthalenivorans (strain CJ2)</name>
    <dbReference type="NCBI Taxonomy" id="365044"/>
    <lineage>
        <taxon>Bacteria</taxon>
        <taxon>Pseudomonadati</taxon>
        <taxon>Pseudomonadota</taxon>
        <taxon>Betaproteobacteria</taxon>
        <taxon>Burkholderiales</taxon>
        <taxon>Comamonadaceae</taxon>
        <taxon>Polaromonas</taxon>
    </lineage>
</organism>
<protein>
    <recommendedName>
        <fullName evidence="1">Large ribosomal subunit protein uL30</fullName>
    </recommendedName>
    <alternativeName>
        <fullName evidence="2">50S ribosomal protein L30</fullName>
    </alternativeName>
</protein>